<organism>
    <name type="scientific">Vibrio cholerae serotype O1 (strain ATCC 39541 / Classical Ogawa 395 / O395)</name>
    <dbReference type="NCBI Taxonomy" id="345073"/>
    <lineage>
        <taxon>Bacteria</taxon>
        <taxon>Pseudomonadati</taxon>
        <taxon>Pseudomonadota</taxon>
        <taxon>Gammaproteobacteria</taxon>
        <taxon>Vibrionales</taxon>
        <taxon>Vibrionaceae</taxon>
        <taxon>Vibrio</taxon>
    </lineage>
</organism>
<gene>
    <name evidence="1" type="primary">argG</name>
    <name type="ordered locus">VC0395_A2218</name>
    <name type="ordered locus">VC395_2755</name>
</gene>
<sequence>MSKVQVKKVVVAYSGGLDTSVIIPWLKENYDCEVVAFVADVGQGDEELKGVEAKALSSGASECYIVDLKEEFVKEYIYPTLKTGAYYEGKYLLGTSMARPVIAKAQVEIARKVGADALAHGCTGKGNDQVRFEGAFAALAPDLHVIAPWREWDLRSREACLDYLAERNIPCAASLTKIYSRDANAWHVSTEGGVLESTWNAPNEDCWVWTVDPEQAPNEAEYVTLQVAHGEVVAVDGEAMTPYNALLYLNQKGAKHGVGRIDIVENRLVGMKSRGCYETPGGTIIMEALRAVEQLVLDKTSFEFREELGIKASHLVYDGRWFTPLRQAVFAAADELAKDVNGEVVIKLYKGQAVATQKRSANSLYSEDFATFGADEVYDHSHAGGFIRLYSLSSRIRALSQNKQ</sequence>
<proteinExistence type="inferred from homology"/>
<protein>
    <recommendedName>
        <fullName evidence="1">Argininosuccinate synthase</fullName>
        <ecNumber evidence="1">6.3.4.5</ecNumber>
    </recommendedName>
    <alternativeName>
        <fullName evidence="1">Citrulline--aspartate ligase</fullName>
    </alternativeName>
</protein>
<evidence type="ECO:0000255" key="1">
    <source>
        <dbReference type="HAMAP-Rule" id="MF_00005"/>
    </source>
</evidence>
<feature type="chain" id="PRO_1000070917" description="Argininosuccinate synthase">
    <location>
        <begin position="1"/>
        <end position="404"/>
    </location>
</feature>
<feature type="binding site" evidence="1">
    <location>
        <begin position="12"/>
        <end position="20"/>
    </location>
    <ligand>
        <name>ATP</name>
        <dbReference type="ChEBI" id="CHEBI:30616"/>
    </ligand>
</feature>
<feature type="binding site" evidence="1">
    <location>
        <position position="39"/>
    </location>
    <ligand>
        <name>ATP</name>
        <dbReference type="ChEBI" id="CHEBI:30616"/>
    </ligand>
</feature>
<feature type="binding site" evidence="1">
    <location>
        <position position="91"/>
    </location>
    <ligand>
        <name>L-citrulline</name>
        <dbReference type="ChEBI" id="CHEBI:57743"/>
    </ligand>
</feature>
<feature type="binding site" evidence="1">
    <location>
        <position position="96"/>
    </location>
    <ligand>
        <name>L-citrulline</name>
        <dbReference type="ChEBI" id="CHEBI:57743"/>
    </ligand>
</feature>
<feature type="binding site" evidence="1">
    <location>
        <position position="121"/>
    </location>
    <ligand>
        <name>ATP</name>
        <dbReference type="ChEBI" id="CHEBI:30616"/>
    </ligand>
</feature>
<feature type="binding site" evidence="1">
    <location>
        <position position="123"/>
    </location>
    <ligand>
        <name>L-aspartate</name>
        <dbReference type="ChEBI" id="CHEBI:29991"/>
    </ligand>
</feature>
<feature type="binding site" evidence="1">
    <location>
        <position position="127"/>
    </location>
    <ligand>
        <name>L-aspartate</name>
        <dbReference type="ChEBI" id="CHEBI:29991"/>
    </ligand>
</feature>
<feature type="binding site" evidence="1">
    <location>
        <position position="127"/>
    </location>
    <ligand>
        <name>L-citrulline</name>
        <dbReference type="ChEBI" id="CHEBI:57743"/>
    </ligand>
</feature>
<feature type="binding site" evidence="1">
    <location>
        <position position="128"/>
    </location>
    <ligand>
        <name>L-aspartate</name>
        <dbReference type="ChEBI" id="CHEBI:29991"/>
    </ligand>
</feature>
<feature type="binding site" evidence="1">
    <location>
        <position position="131"/>
    </location>
    <ligand>
        <name>L-citrulline</name>
        <dbReference type="ChEBI" id="CHEBI:57743"/>
    </ligand>
</feature>
<feature type="binding site" evidence="1">
    <location>
        <position position="180"/>
    </location>
    <ligand>
        <name>L-citrulline</name>
        <dbReference type="ChEBI" id="CHEBI:57743"/>
    </ligand>
</feature>
<feature type="binding site" evidence="1">
    <location>
        <position position="189"/>
    </location>
    <ligand>
        <name>L-citrulline</name>
        <dbReference type="ChEBI" id="CHEBI:57743"/>
    </ligand>
</feature>
<feature type="binding site" evidence="1">
    <location>
        <position position="265"/>
    </location>
    <ligand>
        <name>L-citrulline</name>
        <dbReference type="ChEBI" id="CHEBI:57743"/>
    </ligand>
</feature>
<feature type="binding site" evidence="1">
    <location>
        <position position="277"/>
    </location>
    <ligand>
        <name>L-citrulline</name>
        <dbReference type="ChEBI" id="CHEBI:57743"/>
    </ligand>
</feature>
<name>ASSY_VIBC3</name>
<accession>A5F4Z4</accession>
<accession>C3LXP0</accession>
<dbReference type="EC" id="6.3.4.5" evidence="1"/>
<dbReference type="EMBL" id="CP000627">
    <property type="protein sequence ID" value="ABQ20383.1"/>
    <property type="molecule type" value="Genomic_DNA"/>
</dbReference>
<dbReference type="EMBL" id="CP001235">
    <property type="protein sequence ID" value="ACP10740.1"/>
    <property type="molecule type" value="Genomic_DNA"/>
</dbReference>
<dbReference type="RefSeq" id="WP_000049171.1">
    <property type="nucleotide sequence ID" value="NZ_JAACZH010000007.1"/>
</dbReference>
<dbReference type="SMR" id="A5F4Z4"/>
<dbReference type="KEGG" id="vco:VC0395_A2218"/>
<dbReference type="KEGG" id="vcr:VC395_2755"/>
<dbReference type="PATRIC" id="fig|345073.21.peg.2654"/>
<dbReference type="eggNOG" id="COG0137">
    <property type="taxonomic scope" value="Bacteria"/>
</dbReference>
<dbReference type="HOGENOM" id="CLU_032784_4_2_6"/>
<dbReference type="OrthoDB" id="9801641at2"/>
<dbReference type="UniPathway" id="UPA00068">
    <property type="reaction ID" value="UER00113"/>
</dbReference>
<dbReference type="Proteomes" id="UP000000249">
    <property type="component" value="Chromosome 2"/>
</dbReference>
<dbReference type="GO" id="GO:0005737">
    <property type="term" value="C:cytoplasm"/>
    <property type="evidence" value="ECO:0007669"/>
    <property type="project" value="UniProtKB-SubCell"/>
</dbReference>
<dbReference type="GO" id="GO:0004055">
    <property type="term" value="F:argininosuccinate synthase activity"/>
    <property type="evidence" value="ECO:0007669"/>
    <property type="project" value="UniProtKB-UniRule"/>
</dbReference>
<dbReference type="GO" id="GO:0005524">
    <property type="term" value="F:ATP binding"/>
    <property type="evidence" value="ECO:0007669"/>
    <property type="project" value="UniProtKB-UniRule"/>
</dbReference>
<dbReference type="GO" id="GO:0000053">
    <property type="term" value="P:argininosuccinate metabolic process"/>
    <property type="evidence" value="ECO:0007669"/>
    <property type="project" value="TreeGrafter"/>
</dbReference>
<dbReference type="GO" id="GO:0006526">
    <property type="term" value="P:L-arginine biosynthetic process"/>
    <property type="evidence" value="ECO:0007669"/>
    <property type="project" value="UniProtKB-UniRule"/>
</dbReference>
<dbReference type="GO" id="GO:0000050">
    <property type="term" value="P:urea cycle"/>
    <property type="evidence" value="ECO:0007669"/>
    <property type="project" value="TreeGrafter"/>
</dbReference>
<dbReference type="CDD" id="cd01999">
    <property type="entry name" value="ASS"/>
    <property type="match status" value="1"/>
</dbReference>
<dbReference type="FunFam" id="3.40.50.620:FF:000019">
    <property type="entry name" value="Argininosuccinate synthase"/>
    <property type="match status" value="1"/>
</dbReference>
<dbReference type="FunFam" id="3.90.1260.10:FF:000007">
    <property type="entry name" value="Argininosuccinate synthase"/>
    <property type="match status" value="1"/>
</dbReference>
<dbReference type="Gene3D" id="3.90.1260.10">
    <property type="entry name" value="Argininosuccinate synthetase, chain A, domain 2"/>
    <property type="match status" value="1"/>
</dbReference>
<dbReference type="Gene3D" id="3.40.50.620">
    <property type="entry name" value="HUPs"/>
    <property type="match status" value="1"/>
</dbReference>
<dbReference type="Gene3D" id="1.20.5.470">
    <property type="entry name" value="Single helix bin"/>
    <property type="match status" value="1"/>
</dbReference>
<dbReference type="HAMAP" id="MF_00005">
    <property type="entry name" value="Arg_succ_synth_type1"/>
    <property type="match status" value="1"/>
</dbReference>
<dbReference type="InterPro" id="IPR048268">
    <property type="entry name" value="Arginosuc_syn_C"/>
</dbReference>
<dbReference type="InterPro" id="IPR048267">
    <property type="entry name" value="Arginosuc_syn_N"/>
</dbReference>
<dbReference type="InterPro" id="IPR001518">
    <property type="entry name" value="Arginosuc_synth"/>
</dbReference>
<dbReference type="InterPro" id="IPR018223">
    <property type="entry name" value="Arginosuc_synth_CS"/>
</dbReference>
<dbReference type="InterPro" id="IPR023434">
    <property type="entry name" value="Arginosuc_synth_type_1_subfam"/>
</dbReference>
<dbReference type="InterPro" id="IPR024074">
    <property type="entry name" value="AS_cat/multimer_dom_body"/>
</dbReference>
<dbReference type="InterPro" id="IPR014729">
    <property type="entry name" value="Rossmann-like_a/b/a_fold"/>
</dbReference>
<dbReference type="NCBIfam" id="TIGR00032">
    <property type="entry name" value="argG"/>
    <property type="match status" value="1"/>
</dbReference>
<dbReference type="NCBIfam" id="NF001770">
    <property type="entry name" value="PRK00509.1"/>
    <property type="match status" value="1"/>
</dbReference>
<dbReference type="PANTHER" id="PTHR11587">
    <property type="entry name" value="ARGININOSUCCINATE SYNTHASE"/>
    <property type="match status" value="1"/>
</dbReference>
<dbReference type="PANTHER" id="PTHR11587:SF2">
    <property type="entry name" value="ARGININOSUCCINATE SYNTHASE"/>
    <property type="match status" value="1"/>
</dbReference>
<dbReference type="Pfam" id="PF20979">
    <property type="entry name" value="Arginosuc_syn_C"/>
    <property type="match status" value="1"/>
</dbReference>
<dbReference type="Pfam" id="PF00764">
    <property type="entry name" value="Arginosuc_synth"/>
    <property type="match status" value="1"/>
</dbReference>
<dbReference type="SUPFAM" id="SSF52402">
    <property type="entry name" value="Adenine nucleotide alpha hydrolases-like"/>
    <property type="match status" value="1"/>
</dbReference>
<dbReference type="SUPFAM" id="SSF69864">
    <property type="entry name" value="Argininosuccinate synthetase, C-terminal domain"/>
    <property type="match status" value="1"/>
</dbReference>
<dbReference type="PROSITE" id="PS00564">
    <property type="entry name" value="ARGININOSUCCIN_SYN_1"/>
    <property type="match status" value="1"/>
</dbReference>
<dbReference type="PROSITE" id="PS00565">
    <property type="entry name" value="ARGININOSUCCIN_SYN_2"/>
    <property type="match status" value="1"/>
</dbReference>
<keyword id="KW-0028">Amino-acid biosynthesis</keyword>
<keyword id="KW-0055">Arginine biosynthesis</keyword>
<keyword id="KW-0067">ATP-binding</keyword>
<keyword id="KW-0963">Cytoplasm</keyword>
<keyword id="KW-0436">Ligase</keyword>
<keyword id="KW-0547">Nucleotide-binding</keyword>
<reference key="1">
    <citation type="submission" date="2007-03" db="EMBL/GenBank/DDBJ databases">
        <authorList>
            <person name="Heidelberg J."/>
        </authorList>
    </citation>
    <scope>NUCLEOTIDE SEQUENCE [LARGE SCALE GENOMIC DNA]</scope>
    <source>
        <strain>ATCC 39541 / Classical Ogawa 395 / O395</strain>
    </source>
</reference>
<reference key="2">
    <citation type="journal article" date="2008" name="PLoS ONE">
        <title>A recalibrated molecular clock and independent origins for the cholera pandemic clones.</title>
        <authorList>
            <person name="Feng L."/>
            <person name="Reeves P.R."/>
            <person name="Lan R."/>
            <person name="Ren Y."/>
            <person name="Gao C."/>
            <person name="Zhou Z."/>
            <person name="Ren Y."/>
            <person name="Cheng J."/>
            <person name="Wang W."/>
            <person name="Wang J."/>
            <person name="Qian W."/>
            <person name="Li D."/>
            <person name="Wang L."/>
        </authorList>
    </citation>
    <scope>NUCLEOTIDE SEQUENCE [LARGE SCALE GENOMIC DNA]</scope>
    <source>
        <strain>ATCC 39541 / Classical Ogawa 395 / O395</strain>
    </source>
</reference>
<comment type="catalytic activity">
    <reaction evidence="1">
        <text>L-citrulline + L-aspartate + ATP = 2-(N(omega)-L-arginino)succinate + AMP + diphosphate + H(+)</text>
        <dbReference type="Rhea" id="RHEA:10932"/>
        <dbReference type="ChEBI" id="CHEBI:15378"/>
        <dbReference type="ChEBI" id="CHEBI:29991"/>
        <dbReference type="ChEBI" id="CHEBI:30616"/>
        <dbReference type="ChEBI" id="CHEBI:33019"/>
        <dbReference type="ChEBI" id="CHEBI:57472"/>
        <dbReference type="ChEBI" id="CHEBI:57743"/>
        <dbReference type="ChEBI" id="CHEBI:456215"/>
        <dbReference type="EC" id="6.3.4.5"/>
    </reaction>
</comment>
<comment type="pathway">
    <text evidence="1">Amino-acid biosynthesis; L-arginine biosynthesis; L-arginine from L-ornithine and carbamoyl phosphate: step 2/3.</text>
</comment>
<comment type="subunit">
    <text evidence="1">Homotetramer.</text>
</comment>
<comment type="subcellular location">
    <subcellularLocation>
        <location evidence="1">Cytoplasm</location>
    </subcellularLocation>
</comment>
<comment type="similarity">
    <text evidence="1">Belongs to the argininosuccinate synthase family. Type 1 subfamily.</text>
</comment>